<dbReference type="EC" id="1.1.1.85" evidence="1"/>
<dbReference type="EMBL" id="CP001095">
    <property type="protein sequence ID" value="ACJ53134.1"/>
    <property type="molecule type" value="Genomic_DNA"/>
</dbReference>
<dbReference type="EMBL" id="AP010889">
    <property type="protein sequence ID" value="BAJ69724.1"/>
    <property type="molecule type" value="Genomic_DNA"/>
</dbReference>
<dbReference type="RefSeq" id="WP_012578339.1">
    <property type="nucleotide sequence ID" value="NZ_JDTT01000063.1"/>
</dbReference>
<dbReference type="SMR" id="B7GUI8"/>
<dbReference type="KEGG" id="bln:Blon_2070"/>
<dbReference type="KEGG" id="blon:BLIJ_2147"/>
<dbReference type="PATRIC" id="fig|391904.8.peg.2156"/>
<dbReference type="HOGENOM" id="CLU_031953_0_1_11"/>
<dbReference type="UniPathway" id="UPA00048">
    <property type="reaction ID" value="UER00072"/>
</dbReference>
<dbReference type="Proteomes" id="UP000001360">
    <property type="component" value="Chromosome"/>
</dbReference>
<dbReference type="GO" id="GO:0005737">
    <property type="term" value="C:cytoplasm"/>
    <property type="evidence" value="ECO:0007669"/>
    <property type="project" value="UniProtKB-SubCell"/>
</dbReference>
<dbReference type="GO" id="GO:0003862">
    <property type="term" value="F:3-isopropylmalate dehydrogenase activity"/>
    <property type="evidence" value="ECO:0007669"/>
    <property type="project" value="UniProtKB-UniRule"/>
</dbReference>
<dbReference type="GO" id="GO:0046872">
    <property type="term" value="F:metal ion binding"/>
    <property type="evidence" value="ECO:0007669"/>
    <property type="project" value="UniProtKB-KW"/>
</dbReference>
<dbReference type="GO" id="GO:0009098">
    <property type="term" value="P:L-leucine biosynthetic process"/>
    <property type="evidence" value="ECO:0007669"/>
    <property type="project" value="UniProtKB-UniRule"/>
</dbReference>
<dbReference type="Gene3D" id="3.40.718.10">
    <property type="entry name" value="Isopropylmalate Dehydrogenase"/>
    <property type="match status" value="1"/>
</dbReference>
<dbReference type="HAMAP" id="MF_01035">
    <property type="entry name" value="LeuB_type2"/>
    <property type="match status" value="1"/>
</dbReference>
<dbReference type="InterPro" id="IPR050501">
    <property type="entry name" value="ICDH/IPMDH"/>
</dbReference>
<dbReference type="InterPro" id="IPR024084">
    <property type="entry name" value="IsoPropMal-DH-like_dom"/>
</dbReference>
<dbReference type="InterPro" id="IPR023698">
    <property type="entry name" value="LeuB_actb"/>
</dbReference>
<dbReference type="NCBIfam" id="NF002898">
    <property type="entry name" value="PRK03437.1"/>
    <property type="match status" value="1"/>
</dbReference>
<dbReference type="PANTHER" id="PTHR43275">
    <property type="entry name" value="D-MALATE DEHYDROGENASE [DECARBOXYLATING]"/>
    <property type="match status" value="1"/>
</dbReference>
<dbReference type="PANTHER" id="PTHR43275:SF1">
    <property type="entry name" value="D-MALATE DEHYDROGENASE [DECARBOXYLATING]"/>
    <property type="match status" value="1"/>
</dbReference>
<dbReference type="Pfam" id="PF00180">
    <property type="entry name" value="Iso_dh"/>
    <property type="match status" value="1"/>
</dbReference>
<dbReference type="SMART" id="SM01329">
    <property type="entry name" value="Iso_dh"/>
    <property type="match status" value="1"/>
</dbReference>
<dbReference type="SUPFAM" id="SSF53659">
    <property type="entry name" value="Isocitrate/Isopropylmalate dehydrogenase-like"/>
    <property type="match status" value="1"/>
</dbReference>
<feature type="chain" id="PRO_1000149449" description="3-isopropylmalate dehydrogenase">
    <location>
        <begin position="1"/>
        <end position="343"/>
    </location>
</feature>
<feature type="binding site" evidence="1">
    <location>
        <position position="94"/>
    </location>
    <ligand>
        <name>substrate</name>
    </ligand>
</feature>
<feature type="binding site" evidence="1">
    <location>
        <position position="104"/>
    </location>
    <ligand>
        <name>substrate</name>
    </ligand>
</feature>
<feature type="binding site" evidence="1">
    <location>
        <position position="128"/>
    </location>
    <ligand>
        <name>substrate</name>
    </ligand>
</feature>
<feature type="binding site" evidence="1">
    <location>
        <position position="218"/>
    </location>
    <ligand>
        <name>Mg(2+)</name>
        <dbReference type="ChEBI" id="CHEBI:18420"/>
    </ligand>
</feature>
<feature type="binding site" evidence="1">
    <location>
        <position position="218"/>
    </location>
    <ligand>
        <name>substrate</name>
    </ligand>
</feature>
<feature type="binding site" evidence="1">
    <location>
        <position position="242"/>
    </location>
    <ligand>
        <name>Mg(2+)</name>
        <dbReference type="ChEBI" id="CHEBI:18420"/>
    </ligand>
</feature>
<feature type="binding site" evidence="1">
    <location>
        <position position="246"/>
    </location>
    <ligand>
        <name>Mg(2+)</name>
        <dbReference type="ChEBI" id="CHEBI:18420"/>
    </ligand>
</feature>
<feature type="binding site" evidence="1">
    <location>
        <begin position="278"/>
        <end position="290"/>
    </location>
    <ligand>
        <name>NAD(+)</name>
        <dbReference type="ChEBI" id="CHEBI:57540"/>
    </ligand>
</feature>
<feature type="site" description="Important for catalysis" evidence="1">
    <location>
        <position position="135"/>
    </location>
</feature>
<feature type="site" description="Important for catalysis" evidence="1">
    <location>
        <position position="185"/>
    </location>
</feature>
<accession>B7GUI8</accession>
<accession>E8MME7</accession>
<keyword id="KW-0028">Amino-acid biosynthesis</keyword>
<keyword id="KW-0100">Branched-chain amino acid biosynthesis</keyword>
<keyword id="KW-0963">Cytoplasm</keyword>
<keyword id="KW-0432">Leucine biosynthesis</keyword>
<keyword id="KW-0460">Magnesium</keyword>
<keyword id="KW-0464">Manganese</keyword>
<keyword id="KW-0479">Metal-binding</keyword>
<keyword id="KW-0520">NAD</keyword>
<keyword id="KW-0560">Oxidoreductase</keyword>
<proteinExistence type="inferred from homology"/>
<name>LEU3_BIFLS</name>
<organism>
    <name type="scientific">Bifidobacterium longum subsp. infantis (strain ATCC 15697 / DSM 20088 / JCM 1222 / NCTC 11817 / S12)</name>
    <dbReference type="NCBI Taxonomy" id="391904"/>
    <lineage>
        <taxon>Bacteria</taxon>
        <taxon>Bacillati</taxon>
        <taxon>Actinomycetota</taxon>
        <taxon>Actinomycetes</taxon>
        <taxon>Bifidobacteriales</taxon>
        <taxon>Bifidobacteriaceae</taxon>
        <taxon>Bifidobacterium</taxon>
    </lineage>
</organism>
<evidence type="ECO:0000255" key="1">
    <source>
        <dbReference type="HAMAP-Rule" id="MF_01035"/>
    </source>
</evidence>
<gene>
    <name evidence="1" type="primary">leuB</name>
    <name type="ordered locus">Blon_2070</name>
    <name type="ordered locus">BLIJ_2147</name>
</gene>
<protein>
    <recommendedName>
        <fullName evidence="1">3-isopropylmalate dehydrogenase</fullName>
        <ecNumber evidence="1">1.1.1.85</ecNumber>
    </recommendedName>
    <alternativeName>
        <fullName evidence="1">3-IPM-DH</fullName>
    </alternativeName>
    <alternativeName>
        <fullName evidence="1">Beta-IPM dehydrogenase</fullName>
        <shortName evidence="1">IMDH</shortName>
    </alternativeName>
</protein>
<comment type="function">
    <text evidence="1">Catalyzes the oxidation of 3-carboxy-2-hydroxy-4-methylpentanoate (3-isopropylmalate) to 3-carboxy-4-methyl-2-oxopentanoate. The product decarboxylates to 4-methyl-2 oxopentanoate.</text>
</comment>
<comment type="catalytic activity">
    <reaction evidence="1">
        <text>(2R,3S)-3-isopropylmalate + NAD(+) = 4-methyl-2-oxopentanoate + CO2 + NADH</text>
        <dbReference type="Rhea" id="RHEA:32271"/>
        <dbReference type="ChEBI" id="CHEBI:16526"/>
        <dbReference type="ChEBI" id="CHEBI:17865"/>
        <dbReference type="ChEBI" id="CHEBI:35121"/>
        <dbReference type="ChEBI" id="CHEBI:57540"/>
        <dbReference type="ChEBI" id="CHEBI:57945"/>
        <dbReference type="EC" id="1.1.1.85"/>
    </reaction>
</comment>
<comment type="cofactor">
    <cofactor evidence="1">
        <name>Mg(2+)</name>
        <dbReference type="ChEBI" id="CHEBI:18420"/>
    </cofactor>
    <cofactor evidence="1">
        <name>Mn(2+)</name>
        <dbReference type="ChEBI" id="CHEBI:29035"/>
    </cofactor>
    <text evidence="1">Binds 1 Mg(2+) or Mn(2+) ion per subunit.</text>
</comment>
<comment type="pathway">
    <text evidence="1">Amino-acid biosynthesis; L-leucine biosynthesis; L-leucine from 3-methyl-2-oxobutanoate: step 3/4.</text>
</comment>
<comment type="subunit">
    <text evidence="1">Homodimer.</text>
</comment>
<comment type="subcellular location">
    <subcellularLocation>
        <location evidence="1">Cytoplasm</location>
    </subcellularLocation>
</comment>
<comment type="similarity">
    <text evidence="1">Belongs to the isocitrate and isopropylmalate dehydrogenases family. LeuB type 2 subfamily.</text>
</comment>
<sequence length="343" mass="37174">MAKTYKIAVIPGDGIGKEVTPWAQKALEKAAEGVADFEYENFDLGAERYLRDGAILPEDEEGRIKANDAILLGAVGDPRIKAGILERGLLLKLRFDLDQYVNLRPSKLYKGVTSPLANPGDIDFVVVREGTEGLYCGAGGAVRRNTPQEVATEVSINTAYGVERVVRYAFKLAMKRKKHVTLVHKKNVLVNAGDMWQRIVDKVGEEYPEVTHDYQHIDAATIFLVSDPSRFDVILTDNLFGDILTDEAGSVVGGVGYSASGCINASDEFPSMFEPIHGSAPDIAGQNKANPTAAILSAAMLLEHLGFDDAAKKIHTAVEADIEELGSTVRSTDQVGKDILARM</sequence>
<reference key="1">
    <citation type="journal article" date="2008" name="Proc. Natl. Acad. Sci. U.S.A.">
        <title>The genome sequence of Bifidobacterium longum subsp. infantis reveals adaptations for milk utilization within the infant microbiome.</title>
        <authorList>
            <person name="Sela D.A."/>
            <person name="Chapman J."/>
            <person name="Adeuya A."/>
            <person name="Kim J.H."/>
            <person name="Chen F."/>
            <person name="Whitehead T.R."/>
            <person name="Lapidus A."/>
            <person name="Rokhsar D.S."/>
            <person name="Lebrilla C.B."/>
            <person name="German J.B."/>
            <person name="Price N.P."/>
            <person name="Richardson P.M."/>
            <person name="Mills D.A."/>
        </authorList>
    </citation>
    <scope>NUCLEOTIDE SEQUENCE [LARGE SCALE GENOMIC DNA]</scope>
    <source>
        <strain>ATCC 15697 / DSM 20088 / JCM 1222 / NCTC 11817 / S12</strain>
    </source>
</reference>
<reference key="2">
    <citation type="journal article" date="2011" name="Nature">
        <title>Bifidobacteria can protect from enteropathogenic infection through production of acetate.</title>
        <authorList>
            <person name="Fukuda S."/>
            <person name="Toh H."/>
            <person name="Hase K."/>
            <person name="Oshima K."/>
            <person name="Nakanishi Y."/>
            <person name="Yoshimura K."/>
            <person name="Tobe T."/>
            <person name="Clarke J.M."/>
            <person name="Topping D.L."/>
            <person name="Suzuki T."/>
            <person name="Taylor T.D."/>
            <person name="Itoh K."/>
            <person name="Kikuchi J."/>
            <person name="Morita H."/>
            <person name="Hattori M."/>
            <person name="Ohno H."/>
        </authorList>
    </citation>
    <scope>NUCLEOTIDE SEQUENCE [LARGE SCALE GENOMIC DNA]</scope>
    <source>
        <strain>ATCC 15697 / DSM 20088 / JCM 1222 / NCTC 11817 / S12</strain>
    </source>
</reference>